<dbReference type="EMBL" id="AE000516">
    <property type="protein sequence ID" value="AAK46965.1"/>
    <property type="molecule type" value="Genomic_DNA"/>
</dbReference>
<dbReference type="PIR" id="G70724">
    <property type="entry name" value="G70724"/>
</dbReference>
<dbReference type="RefSeq" id="WP_003413352.1">
    <property type="nucleotide sequence ID" value="NZ_KK341227.1"/>
</dbReference>
<dbReference type="SMR" id="P9WL82"/>
<dbReference type="KEGG" id="mtc:MT2652"/>
<dbReference type="PATRIC" id="fig|83331.31.peg.2859"/>
<dbReference type="HOGENOM" id="CLU_127067_1_0_11"/>
<dbReference type="Proteomes" id="UP000001020">
    <property type="component" value="Chromosome"/>
</dbReference>
<dbReference type="GO" id="GO:0016020">
    <property type="term" value="C:membrane"/>
    <property type="evidence" value="ECO:0007669"/>
    <property type="project" value="UniProtKB-SubCell"/>
</dbReference>
<dbReference type="InterPro" id="IPR016793">
    <property type="entry name" value="UCP021591"/>
</dbReference>
<dbReference type="PIRSF" id="PIRSF021591">
    <property type="entry name" value="UCP021591"/>
    <property type="match status" value="1"/>
</dbReference>
<sequence length="154" mass="15793">MPAGVGNASGSVLDMTSVRTVPSAVALVTFAGAALSGVIPAIARADPVGHQVTYTVTTTSDLMANIRYMSADPPSMAAFNADSSKYMITLHTPIAGGQPLVYTATLANPSQWAIVTASGGLRVNPEFHCEIVVDGQVVVSQDGGSGVQCSTRPW</sequence>
<keyword id="KW-0472">Membrane</keyword>
<keyword id="KW-1185">Reference proteome</keyword>
<keyword id="KW-0812">Transmembrane</keyword>
<keyword id="KW-1133">Transmembrane helix</keyword>
<evidence type="ECO:0000255" key="1"/>
<evidence type="ECO:0000305" key="2"/>
<accession>P9WL82</accession>
<accession>L0TCZ5</accession>
<accession>P65021</accession>
<accession>Q50645</accession>
<gene>
    <name type="ordered locus">MT2652</name>
</gene>
<proteinExistence type="predicted"/>
<organism>
    <name type="scientific">Mycobacterium tuberculosis (strain CDC 1551 / Oshkosh)</name>
    <dbReference type="NCBI Taxonomy" id="83331"/>
    <lineage>
        <taxon>Bacteria</taxon>
        <taxon>Bacillati</taxon>
        <taxon>Actinomycetota</taxon>
        <taxon>Actinomycetes</taxon>
        <taxon>Mycobacteriales</taxon>
        <taxon>Mycobacteriaceae</taxon>
        <taxon>Mycobacterium</taxon>
        <taxon>Mycobacterium tuberculosis complex</taxon>
    </lineage>
</organism>
<protein>
    <recommendedName>
        <fullName>Uncharacterized protein MT2652</fullName>
    </recommendedName>
</protein>
<comment type="subcellular location">
    <subcellularLocation>
        <location evidence="2">Membrane</location>
        <topology evidence="2">Single-pass membrane protein</topology>
    </subcellularLocation>
</comment>
<feature type="chain" id="PRO_0000427524" description="Uncharacterized protein MT2652">
    <location>
        <begin position="1"/>
        <end position="154"/>
    </location>
</feature>
<feature type="transmembrane region" description="Helical" evidence="1">
    <location>
        <begin position="23"/>
        <end position="43"/>
    </location>
</feature>
<name>Y2576_MYCTO</name>
<reference key="1">
    <citation type="journal article" date="2002" name="J. Bacteriol.">
        <title>Whole-genome comparison of Mycobacterium tuberculosis clinical and laboratory strains.</title>
        <authorList>
            <person name="Fleischmann R.D."/>
            <person name="Alland D."/>
            <person name="Eisen J.A."/>
            <person name="Carpenter L."/>
            <person name="White O."/>
            <person name="Peterson J.D."/>
            <person name="DeBoy R.T."/>
            <person name="Dodson R.J."/>
            <person name="Gwinn M.L."/>
            <person name="Haft D.H."/>
            <person name="Hickey E.K."/>
            <person name="Kolonay J.F."/>
            <person name="Nelson W.C."/>
            <person name="Umayam L.A."/>
            <person name="Ermolaeva M.D."/>
            <person name="Salzberg S.L."/>
            <person name="Delcher A."/>
            <person name="Utterback T.R."/>
            <person name="Weidman J.F."/>
            <person name="Khouri H.M."/>
            <person name="Gill J."/>
            <person name="Mikula A."/>
            <person name="Bishai W."/>
            <person name="Jacobs W.R. Jr."/>
            <person name="Venter J.C."/>
            <person name="Fraser C.M."/>
        </authorList>
    </citation>
    <scope>NUCLEOTIDE SEQUENCE [LARGE SCALE GENOMIC DNA]</scope>
    <source>
        <strain>CDC 1551 / Oshkosh</strain>
    </source>
</reference>